<sequence length="268" mass="28721">MAKRGESLRDKPKWSLEGMTALVTGGSKGLGKAVVEELAMLGARVHTCARDETQLQESLREWQAKGLQVTTSVCDVSSRDQREKLMETVSSLFQGKLSILVPNVGIGVLKPTTECTAEEFSFIIATNLESTFHFSQLAHPLLKASGSGNIVLMSSVAGVVNLGNTSIYGATKGAMNQLARNLACEWASDNIRANSVCPWFITTPSTKDFLGDKDVKEKVESVTPLRRVGEANEVSSLVAFLCLPAASYITGQTICVDGGFTINGFSLP</sequence>
<feature type="chain" id="PRO_0000432368" description="Tropinone reductase homolog At2g29370">
    <location>
        <begin position="1"/>
        <end position="268"/>
    </location>
</feature>
<feature type="active site" description="Proton acceptor" evidence="2">
    <location>
        <position position="168"/>
    </location>
</feature>
<feature type="binding site" evidence="1">
    <location>
        <begin position="22"/>
        <end position="46"/>
    </location>
    <ligand>
        <name>NADP(+)</name>
        <dbReference type="ChEBI" id="CHEBI:58349"/>
    </ligand>
</feature>
<feature type="binding site" evidence="1">
    <location>
        <position position="155"/>
    </location>
    <ligand>
        <name>substrate</name>
    </ligand>
</feature>
<name>TRNHD_ARATH</name>
<keyword id="KW-0521">NADP</keyword>
<keyword id="KW-0560">Oxidoreductase</keyword>
<keyword id="KW-1185">Reference proteome</keyword>
<protein>
    <recommendedName>
        <fullName evidence="3">Tropinone reductase homolog At2g29370</fullName>
        <ecNumber evidence="3">1.1.1.-</ecNumber>
    </recommendedName>
</protein>
<organism evidence="6">
    <name type="scientific">Arabidopsis thaliana</name>
    <name type="common">Mouse-ear cress</name>
    <dbReference type="NCBI Taxonomy" id="3702"/>
    <lineage>
        <taxon>Eukaryota</taxon>
        <taxon>Viridiplantae</taxon>
        <taxon>Streptophyta</taxon>
        <taxon>Embryophyta</taxon>
        <taxon>Tracheophyta</taxon>
        <taxon>Spermatophyta</taxon>
        <taxon>Magnoliopsida</taxon>
        <taxon>eudicotyledons</taxon>
        <taxon>Gunneridae</taxon>
        <taxon>Pentapetalae</taxon>
        <taxon>rosids</taxon>
        <taxon>malvids</taxon>
        <taxon>Brassicales</taxon>
        <taxon>Brassicaceae</taxon>
        <taxon>Camelineae</taxon>
        <taxon>Arabidopsis</taxon>
    </lineage>
</organism>
<accession>Q9ZW20</accession>
<proteinExistence type="inferred from homology"/>
<dbReference type="EC" id="1.1.1.-" evidence="3"/>
<dbReference type="EMBL" id="AC004561">
    <property type="protein sequence ID" value="AAC95201.1"/>
    <property type="molecule type" value="Genomic_DNA"/>
</dbReference>
<dbReference type="EMBL" id="CP002685">
    <property type="protein sequence ID" value="AEC08243.1"/>
    <property type="molecule type" value="Genomic_DNA"/>
</dbReference>
<dbReference type="PIR" id="E84695">
    <property type="entry name" value="E84695"/>
</dbReference>
<dbReference type="RefSeq" id="NP_850132.2">
    <property type="nucleotide sequence ID" value="NM_179801.3"/>
</dbReference>
<dbReference type="SMR" id="Q9ZW20"/>
<dbReference type="FunCoup" id="Q9ZW20">
    <property type="interactions" value="43"/>
</dbReference>
<dbReference type="STRING" id="3702.Q9ZW20"/>
<dbReference type="PaxDb" id="3702-AT2G29370.1"/>
<dbReference type="ProteomicsDB" id="232446"/>
<dbReference type="EnsemblPlants" id="AT2G29370.1">
    <property type="protein sequence ID" value="AT2G29370.1"/>
    <property type="gene ID" value="AT2G29370"/>
</dbReference>
<dbReference type="GeneID" id="817486"/>
<dbReference type="Gramene" id="AT2G29370.1">
    <property type="protein sequence ID" value="AT2G29370.1"/>
    <property type="gene ID" value="AT2G29370"/>
</dbReference>
<dbReference type="KEGG" id="ath:AT2G29370"/>
<dbReference type="Araport" id="AT2G29370"/>
<dbReference type="TAIR" id="AT2G29370"/>
<dbReference type="eggNOG" id="KOG0725">
    <property type="taxonomic scope" value="Eukaryota"/>
</dbReference>
<dbReference type="HOGENOM" id="CLU_010194_1_1_1"/>
<dbReference type="InParanoid" id="Q9ZW20"/>
<dbReference type="OMA" id="FGRIDNC"/>
<dbReference type="PhylomeDB" id="Q9ZW20"/>
<dbReference type="BioCyc" id="ARA:AT2G29370-MONOMER"/>
<dbReference type="PRO" id="PR:Q9ZW20"/>
<dbReference type="Proteomes" id="UP000006548">
    <property type="component" value="Chromosome 2"/>
</dbReference>
<dbReference type="ExpressionAtlas" id="Q9ZW20">
    <property type="expression patterns" value="baseline and differential"/>
</dbReference>
<dbReference type="GO" id="GO:0005829">
    <property type="term" value="C:cytosol"/>
    <property type="evidence" value="ECO:0007005"/>
    <property type="project" value="TAIR"/>
</dbReference>
<dbReference type="GO" id="GO:0005777">
    <property type="term" value="C:peroxisome"/>
    <property type="evidence" value="ECO:0007005"/>
    <property type="project" value="TAIR"/>
</dbReference>
<dbReference type="GO" id="GO:0016491">
    <property type="term" value="F:oxidoreductase activity"/>
    <property type="evidence" value="ECO:0007669"/>
    <property type="project" value="UniProtKB-KW"/>
</dbReference>
<dbReference type="FunFam" id="3.40.50.720:FF:000084">
    <property type="entry name" value="Short-chain dehydrogenase reductase"/>
    <property type="match status" value="1"/>
</dbReference>
<dbReference type="Gene3D" id="3.40.50.720">
    <property type="entry name" value="NAD(P)-binding Rossmann-like Domain"/>
    <property type="match status" value="1"/>
</dbReference>
<dbReference type="InterPro" id="IPR036291">
    <property type="entry name" value="NAD(P)-bd_dom_sf"/>
</dbReference>
<dbReference type="InterPro" id="IPR020904">
    <property type="entry name" value="Sc_DH/Rdtase_CS"/>
</dbReference>
<dbReference type="InterPro" id="IPR002347">
    <property type="entry name" value="SDR_fam"/>
</dbReference>
<dbReference type="InterPro" id="IPR045000">
    <property type="entry name" value="TR"/>
</dbReference>
<dbReference type="PANTHER" id="PTHR42898:SF84">
    <property type="entry name" value="SENESCENCE-ASSOCIATED PROTEIN 13"/>
    <property type="match status" value="1"/>
</dbReference>
<dbReference type="PANTHER" id="PTHR42898">
    <property type="entry name" value="TROPINONE REDUCTASE"/>
    <property type="match status" value="1"/>
</dbReference>
<dbReference type="Pfam" id="PF13561">
    <property type="entry name" value="adh_short_C2"/>
    <property type="match status" value="1"/>
</dbReference>
<dbReference type="PRINTS" id="PR00081">
    <property type="entry name" value="GDHRDH"/>
</dbReference>
<dbReference type="PRINTS" id="PR00080">
    <property type="entry name" value="SDRFAMILY"/>
</dbReference>
<dbReference type="SUPFAM" id="SSF51735">
    <property type="entry name" value="NAD(P)-binding Rossmann-fold domains"/>
    <property type="match status" value="1"/>
</dbReference>
<dbReference type="PROSITE" id="PS00061">
    <property type="entry name" value="ADH_SHORT"/>
    <property type="match status" value="1"/>
</dbReference>
<comment type="similarity">
    <text evidence="3">Belongs to the short-chain dehydrogenases/reductases (SDR) family. SDR65C subfamily.</text>
</comment>
<reference key="1">
    <citation type="journal article" date="1999" name="Nature">
        <title>Sequence and analysis of chromosome 2 of the plant Arabidopsis thaliana.</title>
        <authorList>
            <person name="Lin X."/>
            <person name="Kaul S."/>
            <person name="Rounsley S.D."/>
            <person name="Shea T.P."/>
            <person name="Benito M.-I."/>
            <person name="Town C.D."/>
            <person name="Fujii C.Y."/>
            <person name="Mason T.M."/>
            <person name="Bowman C.L."/>
            <person name="Barnstead M.E."/>
            <person name="Feldblyum T.V."/>
            <person name="Buell C.R."/>
            <person name="Ketchum K.A."/>
            <person name="Lee J.J."/>
            <person name="Ronning C.M."/>
            <person name="Koo H.L."/>
            <person name="Moffat K.S."/>
            <person name="Cronin L.A."/>
            <person name="Shen M."/>
            <person name="Pai G."/>
            <person name="Van Aken S."/>
            <person name="Umayam L."/>
            <person name="Tallon L.J."/>
            <person name="Gill J.E."/>
            <person name="Adams M.D."/>
            <person name="Carrera A.J."/>
            <person name="Creasy T.H."/>
            <person name="Goodman H.M."/>
            <person name="Somerville C.R."/>
            <person name="Copenhaver G.P."/>
            <person name="Preuss D."/>
            <person name="Nierman W.C."/>
            <person name="White O."/>
            <person name="Eisen J.A."/>
            <person name="Salzberg S.L."/>
            <person name="Fraser C.M."/>
            <person name="Venter J.C."/>
        </authorList>
    </citation>
    <scope>NUCLEOTIDE SEQUENCE [LARGE SCALE GENOMIC DNA]</scope>
    <source>
        <strain>cv. Columbia</strain>
    </source>
</reference>
<reference key="2">
    <citation type="journal article" date="2017" name="Plant J.">
        <title>Araport11: a complete reannotation of the Arabidopsis thaliana reference genome.</title>
        <authorList>
            <person name="Cheng C.Y."/>
            <person name="Krishnakumar V."/>
            <person name="Chan A.P."/>
            <person name="Thibaud-Nissen F."/>
            <person name="Schobel S."/>
            <person name="Town C.D."/>
        </authorList>
    </citation>
    <scope>GENOME REANNOTATION</scope>
    <source>
        <strain>cv. Columbia</strain>
    </source>
</reference>
<reference key="3">
    <citation type="journal article" date="2009" name="Chem. Biol. Interact.">
        <title>The SDR (short-chain dehydrogenase/reductase and related enzymes) nomenclature initiative.</title>
        <authorList>
            <person name="Persson B."/>
            <person name="Kallberg Y."/>
            <person name="Bray J.E."/>
            <person name="Bruford E."/>
            <person name="Dellaporta S.L."/>
            <person name="Favia A.D."/>
            <person name="Duarte R.G."/>
            <person name="Joernvall H."/>
            <person name="Kavanagh K.L."/>
            <person name="Kedishvili N."/>
            <person name="Kisiela M."/>
            <person name="Maser E."/>
            <person name="Mindnich R."/>
            <person name="Orchard S."/>
            <person name="Penning T.M."/>
            <person name="Thornton J.M."/>
            <person name="Adamski J."/>
            <person name="Oppermann U."/>
        </authorList>
    </citation>
    <scope>GENE FAMILY</scope>
    <scope>NOMENCLATURE</scope>
</reference>
<evidence type="ECO:0000250" key="1">
    <source>
        <dbReference type="UniProtKB" id="P50162"/>
    </source>
</evidence>
<evidence type="ECO:0000255" key="2">
    <source>
        <dbReference type="PROSITE-ProRule" id="PRU10001"/>
    </source>
</evidence>
<evidence type="ECO:0000305" key="3"/>
<evidence type="ECO:0000312" key="4">
    <source>
        <dbReference type="Araport" id="AT2G29370"/>
    </source>
</evidence>
<evidence type="ECO:0000312" key="5">
    <source>
        <dbReference type="EMBL" id="AAC95201.1"/>
    </source>
</evidence>
<evidence type="ECO:0000312" key="6">
    <source>
        <dbReference type="Proteomes" id="UP000006548"/>
    </source>
</evidence>
<gene>
    <name evidence="4" type="ordered locus">At2g29370</name>
    <name evidence="5" type="ORF">F16P2.25</name>
</gene>